<accession>Q3K0Z6</accession>
<dbReference type="EMBL" id="CP000114">
    <property type="protein sequence ID" value="ABA45682.1"/>
    <property type="molecule type" value="Genomic_DNA"/>
</dbReference>
<dbReference type="SMR" id="Q3K0Z6"/>
<dbReference type="KEGG" id="sak:SAK_1186"/>
<dbReference type="HOGENOM" id="CLU_073529_0_2_9"/>
<dbReference type="GO" id="GO:0046872">
    <property type="term" value="F:metal ion binding"/>
    <property type="evidence" value="ECO:0007669"/>
    <property type="project" value="UniProtKB-KW"/>
</dbReference>
<dbReference type="GO" id="GO:0008237">
    <property type="term" value="F:metallopeptidase activity"/>
    <property type="evidence" value="ECO:0007669"/>
    <property type="project" value="UniProtKB-KW"/>
</dbReference>
<dbReference type="GO" id="GO:0006508">
    <property type="term" value="P:proteolysis"/>
    <property type="evidence" value="ECO:0007669"/>
    <property type="project" value="UniProtKB-KW"/>
</dbReference>
<dbReference type="CDD" id="cd08071">
    <property type="entry name" value="MPN_DUF2466"/>
    <property type="match status" value="1"/>
</dbReference>
<dbReference type="Gene3D" id="3.40.140.10">
    <property type="entry name" value="Cytidine Deaminase, domain 2"/>
    <property type="match status" value="1"/>
</dbReference>
<dbReference type="InterPro" id="IPR037518">
    <property type="entry name" value="MPN"/>
</dbReference>
<dbReference type="InterPro" id="IPR025657">
    <property type="entry name" value="RadC_JAB"/>
</dbReference>
<dbReference type="InterPro" id="IPR001405">
    <property type="entry name" value="UPF0758"/>
</dbReference>
<dbReference type="InterPro" id="IPR020891">
    <property type="entry name" value="UPF0758_CS"/>
</dbReference>
<dbReference type="InterPro" id="IPR046778">
    <property type="entry name" value="UPF0758_N"/>
</dbReference>
<dbReference type="NCBIfam" id="NF000642">
    <property type="entry name" value="PRK00024.1"/>
    <property type="match status" value="1"/>
</dbReference>
<dbReference type="NCBIfam" id="TIGR00608">
    <property type="entry name" value="radc"/>
    <property type="match status" value="1"/>
</dbReference>
<dbReference type="PANTHER" id="PTHR30471">
    <property type="entry name" value="DNA REPAIR PROTEIN RADC"/>
    <property type="match status" value="1"/>
</dbReference>
<dbReference type="PANTHER" id="PTHR30471:SF3">
    <property type="entry name" value="UPF0758 PROTEIN YEES-RELATED"/>
    <property type="match status" value="1"/>
</dbReference>
<dbReference type="Pfam" id="PF04002">
    <property type="entry name" value="RadC"/>
    <property type="match status" value="1"/>
</dbReference>
<dbReference type="Pfam" id="PF20582">
    <property type="entry name" value="UPF0758_N"/>
    <property type="match status" value="1"/>
</dbReference>
<dbReference type="SUPFAM" id="SSF102712">
    <property type="entry name" value="JAB1/MPN domain"/>
    <property type="match status" value="1"/>
</dbReference>
<dbReference type="PROSITE" id="PS50249">
    <property type="entry name" value="MPN"/>
    <property type="match status" value="1"/>
</dbReference>
<dbReference type="PROSITE" id="PS01302">
    <property type="entry name" value="UPF0758"/>
    <property type="match status" value="1"/>
</dbReference>
<keyword id="KW-0378">Hydrolase</keyword>
<keyword id="KW-0479">Metal-binding</keyword>
<keyword id="KW-0482">Metalloprotease</keyword>
<keyword id="KW-0645">Protease</keyword>
<keyword id="KW-0862">Zinc</keyword>
<comment type="similarity">
    <text evidence="2">Belongs to the UPF0758 family.</text>
</comment>
<protein>
    <recommendedName>
        <fullName>UPF0758 protein SAK_1186</fullName>
    </recommendedName>
</protein>
<proteinExistence type="inferred from homology"/>
<feature type="chain" id="PRO_1000089851" description="UPF0758 protein SAK_1186">
    <location>
        <begin position="1"/>
        <end position="226"/>
    </location>
</feature>
<feature type="domain" description="MPN" evidence="1">
    <location>
        <begin position="103"/>
        <end position="225"/>
    </location>
</feature>
<feature type="short sequence motif" description="JAMM motif" evidence="1">
    <location>
        <begin position="174"/>
        <end position="187"/>
    </location>
</feature>
<feature type="binding site" evidence="1">
    <location>
        <position position="174"/>
    </location>
    <ligand>
        <name>Zn(2+)</name>
        <dbReference type="ChEBI" id="CHEBI:29105"/>
        <note>catalytic</note>
    </ligand>
</feature>
<feature type="binding site" evidence="1">
    <location>
        <position position="176"/>
    </location>
    <ligand>
        <name>Zn(2+)</name>
        <dbReference type="ChEBI" id="CHEBI:29105"/>
        <note>catalytic</note>
    </ligand>
</feature>
<feature type="binding site" evidence="1">
    <location>
        <position position="187"/>
    </location>
    <ligand>
        <name>Zn(2+)</name>
        <dbReference type="ChEBI" id="CHEBI:29105"/>
        <note>catalytic</note>
    </ligand>
</feature>
<name>Y1186_STRA1</name>
<gene>
    <name type="ordered locus">SAK_1186</name>
</gene>
<sequence length="226" mass="25841">MYHIELKKEALLPRERLVDLGADRLSNQELLAILLRTGIKEKPVLEISTQILENISSLADFGQLSLQELQSIKGIGQVKSVEIKAMLELAKRIHKAEYDRKEQILSSEQLARKMMLELGDKKQEHLVAIYMDTQNRIIEQRTIFIGTVRRSVAEPREILHYACKNMATSLIIIHNHPSGSPKPSESDLSFTKKIKRSCDHLGIVCLDHIIVGKNKYYSFREEADIL</sequence>
<organism>
    <name type="scientific">Streptococcus agalactiae serotype Ia (strain ATCC 27591 / A909 / CDC SS700)</name>
    <dbReference type="NCBI Taxonomy" id="205921"/>
    <lineage>
        <taxon>Bacteria</taxon>
        <taxon>Bacillati</taxon>
        <taxon>Bacillota</taxon>
        <taxon>Bacilli</taxon>
        <taxon>Lactobacillales</taxon>
        <taxon>Streptococcaceae</taxon>
        <taxon>Streptococcus</taxon>
    </lineage>
</organism>
<evidence type="ECO:0000255" key="1">
    <source>
        <dbReference type="PROSITE-ProRule" id="PRU01182"/>
    </source>
</evidence>
<evidence type="ECO:0000305" key="2"/>
<reference key="1">
    <citation type="journal article" date="2005" name="Proc. Natl. Acad. Sci. U.S.A.">
        <title>Genome analysis of multiple pathogenic isolates of Streptococcus agalactiae: implications for the microbial 'pan-genome'.</title>
        <authorList>
            <person name="Tettelin H."/>
            <person name="Masignani V."/>
            <person name="Cieslewicz M.J."/>
            <person name="Donati C."/>
            <person name="Medini D."/>
            <person name="Ward N.L."/>
            <person name="Angiuoli S.V."/>
            <person name="Crabtree J."/>
            <person name="Jones A.L."/>
            <person name="Durkin A.S."/>
            <person name="DeBoy R.T."/>
            <person name="Davidsen T.M."/>
            <person name="Mora M."/>
            <person name="Scarselli M."/>
            <person name="Margarit y Ros I."/>
            <person name="Peterson J.D."/>
            <person name="Hauser C.R."/>
            <person name="Sundaram J.P."/>
            <person name="Nelson W.C."/>
            <person name="Madupu R."/>
            <person name="Brinkac L.M."/>
            <person name="Dodson R.J."/>
            <person name="Rosovitz M.J."/>
            <person name="Sullivan S.A."/>
            <person name="Daugherty S.C."/>
            <person name="Haft D.H."/>
            <person name="Selengut J."/>
            <person name="Gwinn M.L."/>
            <person name="Zhou L."/>
            <person name="Zafar N."/>
            <person name="Khouri H."/>
            <person name="Radune D."/>
            <person name="Dimitrov G."/>
            <person name="Watkins K."/>
            <person name="O'Connor K.J."/>
            <person name="Smith S."/>
            <person name="Utterback T.R."/>
            <person name="White O."/>
            <person name="Rubens C.E."/>
            <person name="Grandi G."/>
            <person name="Madoff L.C."/>
            <person name="Kasper D.L."/>
            <person name="Telford J.L."/>
            <person name="Wessels M.R."/>
            <person name="Rappuoli R."/>
            <person name="Fraser C.M."/>
        </authorList>
    </citation>
    <scope>NUCLEOTIDE SEQUENCE [LARGE SCALE GENOMIC DNA]</scope>
    <source>
        <strain>ATCC 27591 / A909 / CDC SS700</strain>
    </source>
</reference>